<proteinExistence type="inferred from homology"/>
<reference key="1">
    <citation type="journal article" date="2005" name="Nucleic Acids Res.">
        <title>Genome dynamics and diversity of Shigella species, the etiologic agents of bacillary dysentery.</title>
        <authorList>
            <person name="Yang F."/>
            <person name="Yang J."/>
            <person name="Zhang X."/>
            <person name="Chen L."/>
            <person name="Jiang Y."/>
            <person name="Yan Y."/>
            <person name="Tang X."/>
            <person name="Wang J."/>
            <person name="Xiong Z."/>
            <person name="Dong J."/>
            <person name="Xue Y."/>
            <person name="Zhu Y."/>
            <person name="Xu X."/>
            <person name="Sun L."/>
            <person name="Chen S."/>
            <person name="Nie H."/>
            <person name="Peng J."/>
            <person name="Xu J."/>
            <person name="Wang Y."/>
            <person name="Yuan Z."/>
            <person name="Wen Y."/>
            <person name="Yao Z."/>
            <person name="Shen Y."/>
            <person name="Qiang B."/>
            <person name="Hou Y."/>
            <person name="Yu J."/>
            <person name="Jin Q."/>
        </authorList>
    </citation>
    <scope>NUCLEOTIDE SEQUENCE [LARGE SCALE GENOMIC DNA]</scope>
    <source>
        <strain>Sb227</strain>
    </source>
</reference>
<dbReference type="EC" id="2.7.7.6" evidence="1"/>
<dbReference type="EMBL" id="CP000036">
    <property type="protein sequence ID" value="ABB68448.1"/>
    <property type="molecule type" value="Genomic_DNA"/>
</dbReference>
<dbReference type="RefSeq" id="WP_000263098.1">
    <property type="nucleotide sequence ID" value="NC_007613.1"/>
</dbReference>
<dbReference type="SMR" id="Q31U10"/>
<dbReference type="GeneID" id="93777907"/>
<dbReference type="KEGG" id="sbo:SBO_4007"/>
<dbReference type="HOGENOM" id="CLU_000524_4_3_6"/>
<dbReference type="Proteomes" id="UP000007067">
    <property type="component" value="Chromosome"/>
</dbReference>
<dbReference type="GO" id="GO:0000428">
    <property type="term" value="C:DNA-directed RNA polymerase complex"/>
    <property type="evidence" value="ECO:0007669"/>
    <property type="project" value="UniProtKB-KW"/>
</dbReference>
<dbReference type="GO" id="GO:0003677">
    <property type="term" value="F:DNA binding"/>
    <property type="evidence" value="ECO:0007669"/>
    <property type="project" value="UniProtKB-UniRule"/>
</dbReference>
<dbReference type="GO" id="GO:0003899">
    <property type="term" value="F:DNA-directed RNA polymerase activity"/>
    <property type="evidence" value="ECO:0007669"/>
    <property type="project" value="UniProtKB-UniRule"/>
</dbReference>
<dbReference type="GO" id="GO:0032549">
    <property type="term" value="F:ribonucleoside binding"/>
    <property type="evidence" value="ECO:0007669"/>
    <property type="project" value="InterPro"/>
</dbReference>
<dbReference type="GO" id="GO:0006351">
    <property type="term" value="P:DNA-templated transcription"/>
    <property type="evidence" value="ECO:0007669"/>
    <property type="project" value="UniProtKB-UniRule"/>
</dbReference>
<dbReference type="CDD" id="cd00653">
    <property type="entry name" value="RNA_pol_B_RPB2"/>
    <property type="match status" value="1"/>
</dbReference>
<dbReference type="FunFam" id="2.30.150.10:FF:000001">
    <property type="entry name" value="DNA-directed RNA polymerase subunit beta"/>
    <property type="match status" value="1"/>
</dbReference>
<dbReference type="FunFam" id="2.40.270.10:FF:000003">
    <property type="entry name" value="DNA-directed RNA polymerase subunit beta"/>
    <property type="match status" value="1"/>
</dbReference>
<dbReference type="FunFam" id="2.40.270.10:FF:000004">
    <property type="entry name" value="DNA-directed RNA polymerase subunit beta"/>
    <property type="match status" value="1"/>
</dbReference>
<dbReference type="FunFam" id="2.40.50.100:FF:000006">
    <property type="entry name" value="DNA-directed RNA polymerase subunit beta"/>
    <property type="match status" value="1"/>
</dbReference>
<dbReference type="FunFam" id="2.40.50.150:FF:000001">
    <property type="entry name" value="DNA-directed RNA polymerase subunit beta"/>
    <property type="match status" value="1"/>
</dbReference>
<dbReference type="FunFam" id="3.90.1100.10:FF:000002">
    <property type="entry name" value="DNA-directed RNA polymerase subunit beta"/>
    <property type="match status" value="1"/>
</dbReference>
<dbReference type="FunFam" id="3.90.1110.10:FF:000001">
    <property type="entry name" value="DNA-directed RNA polymerase subunit beta"/>
    <property type="match status" value="1"/>
</dbReference>
<dbReference type="FunFam" id="3.90.1110.10:FF:000004">
    <property type="entry name" value="DNA-directed RNA polymerase subunit beta"/>
    <property type="match status" value="1"/>
</dbReference>
<dbReference type="FunFam" id="3.90.1800.10:FF:000001">
    <property type="entry name" value="DNA-directed RNA polymerase subunit beta"/>
    <property type="match status" value="1"/>
</dbReference>
<dbReference type="Gene3D" id="2.40.50.100">
    <property type="match status" value="1"/>
</dbReference>
<dbReference type="Gene3D" id="2.40.50.150">
    <property type="match status" value="1"/>
</dbReference>
<dbReference type="Gene3D" id="3.90.1100.10">
    <property type="match status" value="2"/>
</dbReference>
<dbReference type="Gene3D" id="6.10.140.1670">
    <property type="match status" value="1"/>
</dbReference>
<dbReference type="Gene3D" id="2.30.150.10">
    <property type="entry name" value="DNA-directed RNA polymerase, beta subunit, external 1 domain"/>
    <property type="match status" value="1"/>
</dbReference>
<dbReference type="Gene3D" id="2.40.270.10">
    <property type="entry name" value="DNA-directed RNA polymerase, subunit 2, domain 6"/>
    <property type="match status" value="1"/>
</dbReference>
<dbReference type="Gene3D" id="3.90.1800.10">
    <property type="entry name" value="RNA polymerase alpha subunit dimerisation domain"/>
    <property type="match status" value="1"/>
</dbReference>
<dbReference type="Gene3D" id="3.90.1110.10">
    <property type="entry name" value="RNA polymerase Rpb2, domain 2"/>
    <property type="match status" value="1"/>
</dbReference>
<dbReference type="HAMAP" id="MF_01321">
    <property type="entry name" value="RNApol_bact_RpoB"/>
    <property type="match status" value="1"/>
</dbReference>
<dbReference type="InterPro" id="IPR042107">
    <property type="entry name" value="DNA-dir_RNA_pol_bsu_ext_1_sf"/>
</dbReference>
<dbReference type="InterPro" id="IPR019462">
    <property type="entry name" value="DNA-dir_RNA_pol_bsu_external_1"/>
</dbReference>
<dbReference type="InterPro" id="IPR015712">
    <property type="entry name" value="DNA-dir_RNA_pol_su2"/>
</dbReference>
<dbReference type="InterPro" id="IPR007120">
    <property type="entry name" value="DNA-dir_RNAP_su2_dom"/>
</dbReference>
<dbReference type="InterPro" id="IPR037033">
    <property type="entry name" value="DNA-dir_RNAP_su2_hyb_sf"/>
</dbReference>
<dbReference type="InterPro" id="IPR010243">
    <property type="entry name" value="RNA_pol_bsu_bac"/>
</dbReference>
<dbReference type="InterPro" id="IPR007121">
    <property type="entry name" value="RNA_pol_bsu_CS"/>
</dbReference>
<dbReference type="InterPro" id="IPR007644">
    <property type="entry name" value="RNA_pol_bsu_protrusion"/>
</dbReference>
<dbReference type="InterPro" id="IPR007642">
    <property type="entry name" value="RNA_pol_Rpb2_2"/>
</dbReference>
<dbReference type="InterPro" id="IPR037034">
    <property type="entry name" value="RNA_pol_Rpb2_2_sf"/>
</dbReference>
<dbReference type="InterPro" id="IPR007645">
    <property type="entry name" value="RNA_pol_Rpb2_3"/>
</dbReference>
<dbReference type="InterPro" id="IPR007641">
    <property type="entry name" value="RNA_pol_Rpb2_7"/>
</dbReference>
<dbReference type="InterPro" id="IPR014724">
    <property type="entry name" value="RNA_pol_RPB2_OB-fold"/>
</dbReference>
<dbReference type="NCBIfam" id="NF001616">
    <property type="entry name" value="PRK00405.1"/>
    <property type="match status" value="1"/>
</dbReference>
<dbReference type="NCBIfam" id="TIGR02013">
    <property type="entry name" value="rpoB"/>
    <property type="match status" value="1"/>
</dbReference>
<dbReference type="PANTHER" id="PTHR20856">
    <property type="entry name" value="DNA-DIRECTED RNA POLYMERASE I SUBUNIT 2"/>
    <property type="match status" value="1"/>
</dbReference>
<dbReference type="Pfam" id="PF04563">
    <property type="entry name" value="RNA_pol_Rpb2_1"/>
    <property type="match status" value="1"/>
</dbReference>
<dbReference type="Pfam" id="PF04561">
    <property type="entry name" value="RNA_pol_Rpb2_2"/>
    <property type="match status" value="2"/>
</dbReference>
<dbReference type="Pfam" id="PF04565">
    <property type="entry name" value="RNA_pol_Rpb2_3"/>
    <property type="match status" value="1"/>
</dbReference>
<dbReference type="Pfam" id="PF10385">
    <property type="entry name" value="RNA_pol_Rpb2_45"/>
    <property type="match status" value="1"/>
</dbReference>
<dbReference type="Pfam" id="PF00562">
    <property type="entry name" value="RNA_pol_Rpb2_6"/>
    <property type="match status" value="1"/>
</dbReference>
<dbReference type="Pfam" id="PF04560">
    <property type="entry name" value="RNA_pol_Rpb2_7"/>
    <property type="match status" value="1"/>
</dbReference>
<dbReference type="SUPFAM" id="SSF64484">
    <property type="entry name" value="beta and beta-prime subunits of DNA dependent RNA-polymerase"/>
    <property type="match status" value="1"/>
</dbReference>
<dbReference type="PROSITE" id="PS01166">
    <property type="entry name" value="RNA_POL_BETA"/>
    <property type="match status" value="1"/>
</dbReference>
<comment type="function">
    <text evidence="1">DNA-dependent RNA polymerase catalyzes the transcription of DNA into RNA using the four ribonucleoside triphosphates as substrates.</text>
</comment>
<comment type="catalytic activity">
    <reaction evidence="1">
        <text>RNA(n) + a ribonucleoside 5'-triphosphate = RNA(n+1) + diphosphate</text>
        <dbReference type="Rhea" id="RHEA:21248"/>
        <dbReference type="Rhea" id="RHEA-COMP:14527"/>
        <dbReference type="Rhea" id="RHEA-COMP:17342"/>
        <dbReference type="ChEBI" id="CHEBI:33019"/>
        <dbReference type="ChEBI" id="CHEBI:61557"/>
        <dbReference type="ChEBI" id="CHEBI:140395"/>
        <dbReference type="EC" id="2.7.7.6"/>
    </reaction>
</comment>
<comment type="subunit">
    <text evidence="1">The RNAP catalytic core consists of 2 alpha, 1 beta, 1 beta' and 1 omega subunit. When a sigma factor is associated with the core the holoenzyme is formed, which can initiate transcription.</text>
</comment>
<comment type="similarity">
    <text evidence="1">Belongs to the RNA polymerase beta chain family.</text>
</comment>
<keyword id="KW-0007">Acetylation</keyword>
<keyword id="KW-0240">DNA-directed RNA polymerase</keyword>
<keyword id="KW-0548">Nucleotidyltransferase</keyword>
<keyword id="KW-0804">Transcription</keyword>
<keyword id="KW-0808">Transferase</keyword>
<gene>
    <name evidence="1" type="primary">rpoB</name>
    <name type="ordered locus">SBO_4007</name>
</gene>
<feature type="chain" id="PRO_0000224105" description="DNA-directed RNA polymerase subunit beta">
    <location>
        <begin position="1"/>
        <end position="1342"/>
    </location>
</feature>
<feature type="modified residue" description="N6-acetyllysine" evidence="1">
    <location>
        <position position="1022"/>
    </location>
</feature>
<feature type="modified residue" description="N6-acetyllysine" evidence="1">
    <location>
        <position position="1200"/>
    </location>
</feature>
<organism>
    <name type="scientific">Shigella boydii serotype 4 (strain Sb227)</name>
    <dbReference type="NCBI Taxonomy" id="300268"/>
    <lineage>
        <taxon>Bacteria</taxon>
        <taxon>Pseudomonadati</taxon>
        <taxon>Pseudomonadota</taxon>
        <taxon>Gammaproteobacteria</taxon>
        <taxon>Enterobacterales</taxon>
        <taxon>Enterobacteriaceae</taxon>
        <taxon>Shigella</taxon>
    </lineage>
</organism>
<protein>
    <recommendedName>
        <fullName evidence="1">DNA-directed RNA polymerase subunit beta</fullName>
        <shortName evidence="1">RNAP subunit beta</shortName>
        <ecNumber evidence="1">2.7.7.6</ecNumber>
    </recommendedName>
    <alternativeName>
        <fullName evidence="1">RNA polymerase subunit beta</fullName>
    </alternativeName>
    <alternativeName>
        <fullName evidence="1">Transcriptase subunit beta</fullName>
    </alternativeName>
</protein>
<name>RPOB_SHIBS</name>
<accession>Q31U10</accession>
<evidence type="ECO:0000255" key="1">
    <source>
        <dbReference type="HAMAP-Rule" id="MF_01321"/>
    </source>
</evidence>
<sequence length="1342" mass="150632">MVYSYTEKKRIRKDFGKRPQVLDVPYLLSIQLDSFQKFIEQDPEGQYGLEAAFRSVFPIQSYSGNSELQYVSYRLGEPVFDVQECQIRGVTYSAPLRVKLRLVIYEREAPEGTVKDIKEQEVYMGEIPLMTDNGTFVINGTERVIVSQLHRSPGVFFDSDKGKTHSSGKVLYNARIIPYRGSWLDFEFDPKDNLFVRIDRRRKLPATIILRALNYTTEQILDLFFEKVIFEIRDNKLQMELVPERLRGETASFDIEANGKVYVEKGRRITARHIRQLEKDDVKLIEVPVEYIAGKVVAKDYIDESTGELICAANMELSLDLLAKLSQSGHKRIETLFTNDLDHGPYISETLRVDPTNDRLSALVEIYRMMRPGEPPTREAAESLFENLFFSEDRYDLSAVGRMKFNRSLLREEIEGSGILSKDDIIDVMKKLIDIRNGKGEVDDIDHLGNRRIRSVGEMAENQFRVGLVRVERAVKERLSLGDLDTLMPQDMINAKPISAAVKEFFGSSQLSQFMDQNNPLSEITHKRRISALGPGGLTRERAGFEVRDVHPTHYGRVCPIETPEGPNIGLINSLSVYAQTNEYGFLETPYRKVTDGVVTDEIHYLSAIEEGNYVIAQANSNLDEEGHFVEDLVTCRSKGESSLFSRDQVDYMDVSTQQVVSVGASLIPFLEHDDANRALMGANMQRQAVPTLRADKPLVGTGMERAVAVDSGVTAVAKRGGVVQYVDASRIVIKVNEDEMYPGEAGIDIYNLTKYTRSNQNTCINQMPCVSLGEPVERGDVLADGPSTDLGELALGQNMRVAFMPWNGYNFEDSILVSERVVQEDRFTTIHIQELACVSRDTKLGPEEITADIPNVGEAALSKLDESGIVYIGAEVTGGDILVGKVTPKGETQLTPEEKLLRAIFGEKASDVKDSSLRVPNGVSGTVIDVQVFTRDGVEKDKRALEIEEMQLKQAKKDLSEELQILEAGLFSRIRAVLVAGGVEAEKLDKLPRDRWLELGLTDEEKQNQLEQLAEQYDELKHEFEKKLEAKRRKITQGDDLAPGVLKIVKVYLAVKRRIQPGDKMAGRHGNKGVISKINPIEDMPYDENGTPVDIVLNPLGVPSRMNIGQILETHLGMAAKGIGDKINAMLKQQQEVAKLREFIQRAYDLGADVRQKVDLSTFSDEEVMRLAENLRKGMPIATPVFDGAKEAEIKELLKLGDLPTSGQIRLYDGRTGEQFERPVTVGYMYMLKLNHLVDDKMHARSTGSYSLVTQQPLGGKAQFGGQRFGEMEVWALEAYGAAYTLQEMLTVKSDDVNGRTKMYKNIVDGNHQMEPGMPESFNVLLKEIRSLGINIELEDE</sequence>